<organism>
    <name type="scientific">Rhodospirillum rubrum (strain ATCC 11170 / ATH 1.1.1 / DSM 467 / LMG 4362 / NCIMB 8255 / S1)</name>
    <dbReference type="NCBI Taxonomy" id="269796"/>
    <lineage>
        <taxon>Bacteria</taxon>
        <taxon>Pseudomonadati</taxon>
        <taxon>Pseudomonadota</taxon>
        <taxon>Alphaproteobacteria</taxon>
        <taxon>Rhodospirillales</taxon>
        <taxon>Rhodospirillaceae</taxon>
        <taxon>Rhodospirillum</taxon>
    </lineage>
</organism>
<feature type="chain" id="PRO_0000345534" description="Small ribosomal subunit protein bS18">
    <location>
        <begin position="1"/>
        <end position="78"/>
    </location>
</feature>
<proteinExistence type="inferred from homology"/>
<comment type="function">
    <text evidence="1">Binds as a heterodimer with protein bS6 to the central domain of the 16S rRNA, where it helps stabilize the platform of the 30S subunit.</text>
</comment>
<comment type="subunit">
    <text evidence="1">Part of the 30S ribosomal subunit. Forms a tight heterodimer with protein bS6.</text>
</comment>
<comment type="similarity">
    <text evidence="1">Belongs to the bacterial ribosomal protein bS18 family.</text>
</comment>
<evidence type="ECO:0000255" key="1">
    <source>
        <dbReference type="HAMAP-Rule" id="MF_00270"/>
    </source>
</evidence>
<evidence type="ECO:0000305" key="2"/>
<keyword id="KW-1185">Reference proteome</keyword>
<keyword id="KW-0687">Ribonucleoprotein</keyword>
<keyword id="KW-0689">Ribosomal protein</keyword>
<keyword id="KW-0694">RNA-binding</keyword>
<keyword id="KW-0699">rRNA-binding</keyword>
<accession>Q2RXC7</accession>
<gene>
    <name evidence="1" type="primary">rpsR</name>
    <name type="ordered locus">Rru_A0413</name>
</gene>
<reference key="1">
    <citation type="journal article" date="2011" name="Stand. Genomic Sci.">
        <title>Complete genome sequence of Rhodospirillum rubrum type strain (S1).</title>
        <authorList>
            <person name="Munk A.C."/>
            <person name="Copeland A."/>
            <person name="Lucas S."/>
            <person name="Lapidus A."/>
            <person name="Del Rio T.G."/>
            <person name="Barry K."/>
            <person name="Detter J.C."/>
            <person name="Hammon N."/>
            <person name="Israni S."/>
            <person name="Pitluck S."/>
            <person name="Brettin T."/>
            <person name="Bruce D."/>
            <person name="Han C."/>
            <person name="Tapia R."/>
            <person name="Gilna P."/>
            <person name="Schmutz J."/>
            <person name="Larimer F."/>
            <person name="Land M."/>
            <person name="Kyrpides N.C."/>
            <person name="Mavromatis K."/>
            <person name="Richardson P."/>
            <person name="Rohde M."/>
            <person name="Goeker M."/>
            <person name="Klenk H.P."/>
            <person name="Zhang Y."/>
            <person name="Roberts G.P."/>
            <person name="Reslewic S."/>
            <person name="Schwartz D.C."/>
        </authorList>
    </citation>
    <scope>NUCLEOTIDE SEQUENCE [LARGE SCALE GENOMIC DNA]</scope>
    <source>
        <strain>ATCC 11170 / ATH 1.1.1 / DSM 467 / LMG 4362 / NCIMB 8255 / S1</strain>
    </source>
</reference>
<protein>
    <recommendedName>
        <fullName evidence="1">Small ribosomal subunit protein bS18</fullName>
    </recommendedName>
    <alternativeName>
        <fullName evidence="2">30S ribosomal protein S18</fullName>
    </alternativeName>
</protein>
<name>RS18_RHORT</name>
<sequence>MMAAPRRPFFRRRKTCPFSGAGAPKIDYKDIKLLLRFVSERGKIVPSRITAVSAKKQRELARAIKRARFLSLLPYVLK</sequence>
<dbReference type="EMBL" id="CP000230">
    <property type="protein sequence ID" value="ABC21218.1"/>
    <property type="molecule type" value="Genomic_DNA"/>
</dbReference>
<dbReference type="RefSeq" id="WP_011388172.1">
    <property type="nucleotide sequence ID" value="NC_007643.1"/>
</dbReference>
<dbReference type="RefSeq" id="YP_425505.1">
    <property type="nucleotide sequence ID" value="NC_007643.1"/>
</dbReference>
<dbReference type="SMR" id="Q2RXC7"/>
<dbReference type="STRING" id="269796.Rru_A0413"/>
<dbReference type="EnsemblBacteria" id="ABC21218">
    <property type="protein sequence ID" value="ABC21218"/>
    <property type="gene ID" value="Rru_A0413"/>
</dbReference>
<dbReference type="KEGG" id="rru:Rru_A0413"/>
<dbReference type="PATRIC" id="fig|269796.9.peg.469"/>
<dbReference type="eggNOG" id="COG0238">
    <property type="taxonomic scope" value="Bacteria"/>
</dbReference>
<dbReference type="HOGENOM" id="CLU_148710_2_2_5"/>
<dbReference type="PhylomeDB" id="Q2RXC7"/>
<dbReference type="Proteomes" id="UP000001929">
    <property type="component" value="Chromosome"/>
</dbReference>
<dbReference type="GO" id="GO:0022627">
    <property type="term" value="C:cytosolic small ribosomal subunit"/>
    <property type="evidence" value="ECO:0007669"/>
    <property type="project" value="TreeGrafter"/>
</dbReference>
<dbReference type="GO" id="GO:0070181">
    <property type="term" value="F:small ribosomal subunit rRNA binding"/>
    <property type="evidence" value="ECO:0007669"/>
    <property type="project" value="TreeGrafter"/>
</dbReference>
<dbReference type="GO" id="GO:0003735">
    <property type="term" value="F:structural constituent of ribosome"/>
    <property type="evidence" value="ECO:0007669"/>
    <property type="project" value="InterPro"/>
</dbReference>
<dbReference type="GO" id="GO:0006412">
    <property type="term" value="P:translation"/>
    <property type="evidence" value="ECO:0007669"/>
    <property type="project" value="UniProtKB-UniRule"/>
</dbReference>
<dbReference type="Gene3D" id="4.10.640.10">
    <property type="entry name" value="Ribosomal protein S18"/>
    <property type="match status" value="1"/>
</dbReference>
<dbReference type="HAMAP" id="MF_00270">
    <property type="entry name" value="Ribosomal_bS18"/>
    <property type="match status" value="1"/>
</dbReference>
<dbReference type="InterPro" id="IPR001648">
    <property type="entry name" value="Ribosomal_bS18"/>
</dbReference>
<dbReference type="InterPro" id="IPR018275">
    <property type="entry name" value="Ribosomal_bS18_CS"/>
</dbReference>
<dbReference type="InterPro" id="IPR036870">
    <property type="entry name" value="Ribosomal_bS18_sf"/>
</dbReference>
<dbReference type="NCBIfam" id="TIGR00165">
    <property type="entry name" value="S18"/>
    <property type="match status" value="1"/>
</dbReference>
<dbReference type="PANTHER" id="PTHR13479">
    <property type="entry name" value="30S RIBOSOMAL PROTEIN S18"/>
    <property type="match status" value="1"/>
</dbReference>
<dbReference type="PANTHER" id="PTHR13479:SF40">
    <property type="entry name" value="SMALL RIBOSOMAL SUBUNIT PROTEIN BS18M"/>
    <property type="match status" value="1"/>
</dbReference>
<dbReference type="Pfam" id="PF01084">
    <property type="entry name" value="Ribosomal_S18"/>
    <property type="match status" value="1"/>
</dbReference>
<dbReference type="PRINTS" id="PR00974">
    <property type="entry name" value="RIBOSOMALS18"/>
</dbReference>
<dbReference type="SUPFAM" id="SSF46911">
    <property type="entry name" value="Ribosomal protein S18"/>
    <property type="match status" value="1"/>
</dbReference>
<dbReference type="PROSITE" id="PS00057">
    <property type="entry name" value="RIBOSOMAL_S18"/>
    <property type="match status" value="1"/>
</dbReference>